<evidence type="ECO:0000250" key="1">
    <source>
        <dbReference type="UniProtKB" id="Q5R1T0"/>
    </source>
</evidence>
<evidence type="ECO:0000256" key="2">
    <source>
        <dbReference type="SAM" id="MobiDB-lite"/>
    </source>
</evidence>
<evidence type="ECO:0000269" key="3">
    <source>
    </source>
</evidence>
<evidence type="ECO:0000269" key="4">
    <source>
    </source>
</evidence>
<evidence type="ECO:0000269" key="5">
    <source>
    </source>
</evidence>
<evidence type="ECO:0000269" key="6">
    <source>
    </source>
</evidence>
<evidence type="ECO:0000269" key="7">
    <source>
    </source>
</evidence>
<evidence type="ECO:0000269" key="8">
    <source>
    </source>
</evidence>
<evidence type="ECO:0000269" key="9">
    <source>
    </source>
</evidence>
<evidence type="ECO:0000269" key="10">
    <source>
    </source>
</evidence>
<evidence type="ECO:0000269" key="11">
    <source>
    </source>
</evidence>
<evidence type="ECO:0000269" key="12">
    <source>
    </source>
</evidence>
<evidence type="ECO:0000305" key="13"/>
<evidence type="ECO:0000312" key="14">
    <source>
        <dbReference type="HGNC" id="HGNC:1910"/>
    </source>
</evidence>
<evidence type="ECO:0007744" key="15">
    <source>
    </source>
</evidence>
<evidence type="ECO:0007744" key="16">
    <source>
    </source>
</evidence>
<evidence type="ECO:0007744" key="17">
    <source>
    </source>
</evidence>
<evidence type="ECO:0007744" key="18">
    <source>
    </source>
</evidence>
<evidence type="ECO:0007744" key="19">
    <source>
    </source>
</evidence>
<evidence type="ECO:0007744" key="20">
    <source>
    </source>
</evidence>
<evidence type="ECO:0007744" key="21">
    <source>
    </source>
</evidence>
<evidence type="ECO:0007744" key="22">
    <source>
    </source>
</evidence>
<evidence type="ECO:0007829" key="23">
    <source>
        <dbReference type="PDB" id="7Y5K"/>
    </source>
</evidence>
<evidence type="ECO:0007829" key="24">
    <source>
        <dbReference type="PDB" id="7Y5L"/>
    </source>
</evidence>
<evidence type="ECO:0007829" key="25">
    <source>
        <dbReference type="PDB" id="8IQG"/>
    </source>
</evidence>
<organism>
    <name type="scientific">Homo sapiens</name>
    <name type="common">Human</name>
    <dbReference type="NCBI Taxonomy" id="9606"/>
    <lineage>
        <taxon>Eukaryota</taxon>
        <taxon>Metazoa</taxon>
        <taxon>Chordata</taxon>
        <taxon>Craniata</taxon>
        <taxon>Vertebrata</taxon>
        <taxon>Euteleostomi</taxon>
        <taxon>Mammalia</taxon>
        <taxon>Eutheria</taxon>
        <taxon>Euarchontoglires</taxon>
        <taxon>Primates</taxon>
        <taxon>Haplorrhini</taxon>
        <taxon>Catarrhini</taxon>
        <taxon>Hominidae</taxon>
        <taxon>Homo</taxon>
    </lineage>
</organism>
<feature type="chain" id="PRO_0000089276" description="Chromatin assembly factor 1 subunit A">
    <location>
        <begin position="1"/>
        <end position="956"/>
    </location>
</feature>
<feature type="region of interest" description="Binds to CBX1 chromo shadow domain">
    <location>
        <begin position="1"/>
        <end position="314"/>
    </location>
</feature>
<feature type="region of interest" description="Binds to PCNA">
    <location>
        <begin position="1"/>
        <end position="49"/>
    </location>
</feature>
<feature type="region of interest" description="Disordered" evidence="2">
    <location>
        <begin position="45"/>
        <end position="65"/>
    </location>
</feature>
<feature type="region of interest" description="Disordered" evidence="2">
    <location>
        <begin position="122"/>
        <end position="155"/>
    </location>
</feature>
<feature type="region of interest" description="Disordered" evidence="2">
    <location>
        <begin position="188"/>
        <end position="222"/>
    </location>
</feature>
<feature type="region of interest" description="Disordered" evidence="2">
    <location>
        <begin position="250"/>
        <end position="432"/>
    </location>
</feature>
<feature type="region of interest" description="Disordered" evidence="2">
    <location>
        <begin position="599"/>
        <end position="639"/>
    </location>
</feature>
<feature type="region of interest" description="Necessary for homodimerization and competence for chromatin assembly">
    <location>
        <begin position="642"/>
        <end position="678"/>
    </location>
</feature>
<feature type="region of interest" description="Binds to p60">
    <location>
        <begin position="660"/>
        <end position="956"/>
    </location>
</feature>
<feature type="region of interest" description="Disordered" evidence="2">
    <location>
        <begin position="765"/>
        <end position="790"/>
    </location>
</feature>
<feature type="region of interest" description="Disordered" evidence="2">
    <location>
        <begin position="844"/>
        <end position="873"/>
    </location>
</feature>
<feature type="region of interest" description="Disordered" evidence="2">
    <location>
        <begin position="933"/>
        <end position="956"/>
    </location>
</feature>
<feature type="short sequence motif" description="PxVxL motif">
    <location>
        <begin position="233"/>
        <end position="246"/>
    </location>
</feature>
<feature type="compositionally biased region" description="Polar residues" evidence="2">
    <location>
        <begin position="56"/>
        <end position="65"/>
    </location>
</feature>
<feature type="compositionally biased region" description="Low complexity" evidence="2">
    <location>
        <begin position="282"/>
        <end position="296"/>
    </location>
</feature>
<feature type="compositionally biased region" description="Low complexity" evidence="2">
    <location>
        <begin position="307"/>
        <end position="317"/>
    </location>
</feature>
<feature type="compositionally biased region" description="Basic and acidic residues" evidence="2">
    <location>
        <begin position="329"/>
        <end position="432"/>
    </location>
</feature>
<feature type="compositionally biased region" description="Acidic residues" evidence="2">
    <location>
        <begin position="599"/>
        <end position="610"/>
    </location>
</feature>
<feature type="compositionally biased region" description="Acidic residues" evidence="2">
    <location>
        <begin position="618"/>
        <end position="633"/>
    </location>
</feature>
<feature type="compositionally biased region" description="Polar residues" evidence="2">
    <location>
        <begin position="767"/>
        <end position="786"/>
    </location>
</feature>
<feature type="compositionally biased region" description="Polar residues" evidence="2">
    <location>
        <begin position="855"/>
        <end position="866"/>
    </location>
</feature>
<feature type="modified residue" description="Phosphoserine" evidence="15 18">
    <location>
        <position position="65"/>
    </location>
</feature>
<feature type="modified residue" description="Phosphoserine" evidence="17">
    <location>
        <position position="123"/>
    </location>
</feature>
<feature type="modified residue" description="Phosphoserine" evidence="17">
    <location>
        <position position="138"/>
    </location>
</feature>
<feature type="modified residue" description="Phosphoserine" evidence="17 18 19">
    <location>
        <position position="141"/>
    </location>
</feature>
<feature type="modified residue" description="Phosphoserine" evidence="17 18">
    <location>
        <position position="143"/>
    </location>
</feature>
<feature type="modified residue" description="Phosphoserine" evidence="18 19">
    <location>
        <position position="206"/>
    </location>
</feature>
<feature type="modified residue" description="Phosphoserine" evidence="16 17">
    <location>
        <position position="224"/>
    </location>
</feature>
<feature type="modified residue" description="Phosphoserine" evidence="19">
    <location>
        <position position="310"/>
    </location>
</feature>
<feature type="modified residue" description="Phosphothreonine" evidence="16 17 18">
    <location>
        <position position="722"/>
    </location>
</feature>
<feature type="modified residue" description="Phosphoserine" evidence="16 17 18 19">
    <location>
        <position position="772"/>
    </location>
</feature>
<feature type="modified residue" description="Phosphoserine" evidence="16 18">
    <location>
        <position position="775"/>
    </location>
</feature>
<feature type="modified residue" description="Phosphoserine" evidence="19">
    <location>
        <position position="803"/>
    </location>
</feature>
<feature type="modified residue" description="Phosphothreonine" evidence="17">
    <location>
        <position position="865"/>
    </location>
</feature>
<feature type="modified residue" description="Phosphoserine" evidence="19">
    <location>
        <position position="868"/>
    </location>
</feature>
<feature type="modified residue" description="Phosphoserine" evidence="16 17 19">
    <location>
        <position position="873"/>
    </location>
</feature>
<feature type="modified residue" description="Phosphoserine" evidence="16 17 18">
    <location>
        <position position="951"/>
    </location>
</feature>
<feature type="cross-link" description="Glycyl lysine isopeptide (Lys-Gly) (interchain with G-Cter in SUMO1); alternate" evidence="20">
    <location>
        <position position="182"/>
    </location>
</feature>
<feature type="cross-link" description="Glycyl lysine isopeptide (Lys-Gly) (interchain with G-Cter in SUMO2); alternate" evidence="21 22">
    <location>
        <position position="182"/>
    </location>
</feature>
<feature type="splice variant" id="VSP_004149" description="In isoform 2." evidence="13">
    <original>CFLETLPAQEEQTPKASKRERRDEQILAQLLPLLHGNVNG</original>
    <variation>HWVHPESRGDVCRTLRVSSPQSRYLNRLNSCVKSTLSCFT</variation>
    <location>
        <begin position="710"/>
        <end position="749"/>
    </location>
</feature>
<feature type="splice variant" id="VSP_004150" description="In isoform 2." evidence="13">
    <location>
        <begin position="750"/>
        <end position="956"/>
    </location>
</feature>
<feature type="splice variant" id="VSP_004151" description="In isoform 3." evidence="13">
    <location>
        <begin position="772"/>
        <end position="944"/>
    </location>
</feature>
<feature type="sequence variant" id="VAR_055329" description="In dbSNP:rs35651457.">
    <original>D</original>
    <variation>V</variation>
    <location>
        <position position="167"/>
    </location>
</feature>
<feature type="sequence variant" id="VAR_055330" description="In dbSNP:rs2230635.">
    <original>M</original>
    <variation>V</variation>
    <location>
        <position position="239"/>
    </location>
</feature>
<feature type="sequence variant" id="VAR_055331" description="In dbSNP:rs8100525.">
    <original>K</original>
    <variation>R</variation>
    <location>
        <position position="850"/>
    </location>
</feature>
<feature type="sequence variant" id="VAR_055332" description="In dbSNP:rs9352." evidence="5 12">
    <original>A</original>
    <variation>V</variation>
    <location>
        <position position="923"/>
    </location>
</feature>
<feature type="sequence variant" id="VAR_055333" description="In dbSNP:rs243383.">
    <original>A</original>
    <variation>S</variation>
    <location>
        <position position="950"/>
    </location>
</feature>
<feature type="mutagenesis site" description="Abolishes interaction with CBX5; when associated with E-242." evidence="9">
    <original>V</original>
    <variation>E</variation>
    <location>
        <position position="240"/>
    </location>
</feature>
<feature type="mutagenesis site" description="Abolishes interaction with CBX5; when associated with E-240." evidence="9">
    <original>L</original>
    <variation>E</variation>
    <location>
        <position position="242"/>
    </location>
</feature>
<feature type="sequence conflict" description="In Ref. 4; AAA76736." evidence="13" ref="4">
    <original>S</original>
    <variation>T</variation>
    <location>
        <position position="775"/>
    </location>
</feature>
<feature type="strand" evidence="24">
    <location>
        <begin position="477"/>
        <end position="479"/>
    </location>
</feature>
<feature type="helix" evidence="24">
    <location>
        <begin position="491"/>
        <end position="501"/>
    </location>
</feature>
<feature type="helix" evidence="24">
    <location>
        <begin position="508"/>
        <end position="513"/>
    </location>
</feature>
<feature type="strand" evidence="24">
    <location>
        <begin position="538"/>
        <end position="543"/>
    </location>
</feature>
<feature type="helix" evidence="24">
    <location>
        <begin position="551"/>
        <end position="554"/>
    </location>
</feature>
<feature type="strand" evidence="24">
    <location>
        <begin position="558"/>
        <end position="561"/>
    </location>
</feature>
<feature type="strand" evidence="24">
    <location>
        <begin position="570"/>
        <end position="572"/>
    </location>
</feature>
<feature type="turn" evidence="24">
    <location>
        <begin position="591"/>
        <end position="593"/>
    </location>
</feature>
<feature type="helix" evidence="23">
    <location>
        <begin position="600"/>
        <end position="603"/>
    </location>
</feature>
<feature type="strand" evidence="25">
    <location>
        <begin position="614"/>
        <end position="620"/>
    </location>
</feature>
<feature type="strand" evidence="25">
    <location>
        <begin position="630"/>
        <end position="632"/>
    </location>
</feature>
<feature type="helix" evidence="25">
    <location>
        <begin position="636"/>
        <end position="646"/>
    </location>
</feature>
<feature type="strand" evidence="24">
    <location>
        <begin position="659"/>
        <end position="663"/>
    </location>
</feature>
<feature type="helix" evidence="24">
    <location>
        <begin position="665"/>
        <end position="674"/>
    </location>
</feature>
<feature type="strand" evidence="24">
    <location>
        <begin position="684"/>
        <end position="686"/>
    </location>
</feature>
<feature type="strand" evidence="24">
    <location>
        <begin position="694"/>
        <end position="696"/>
    </location>
</feature>
<feature type="helix" evidence="24">
    <location>
        <begin position="698"/>
        <end position="705"/>
    </location>
</feature>
<comment type="function">
    <text evidence="1">Acts as a component of the histone chaperone complex chromatin assembly factor 1 (CAF-1), which assembles histone octamers onto DNA during replication and repair. CAF-1 performs the first step of the nucleosome assembly process, bringing newly synthesized histones H3 and H4 to replicating DNA; histones H2A/H2B can bind to this chromatin precursor subsequent to DNA replication to complete the histone octamer. It may play a role in heterochromatin maintenance in proliferating cells by bringing newly synthesized cbx proteins to heterochromatic DNA replication foci.</text>
</comment>
<comment type="subunit">
    <text evidence="3 4 6 8 9 11">Homodimer. Part of the CAF-1 complex that contains RBBP4, CHAF1B and CHAF1A. CHAF1A binds directly to CHAF1B. Only minor amounts of RBBP4 are complexed with CHAF1A and CHAF1B in G1 phase. Interacts with PCNA; the interaction is direct (PubMed:10052459, PubMed:10648606). Interacts (via the PxVxL motif) with CBX5; the interaction is direct (PubMed:15882967, PubMed:20562864). Interacts with MBD1 (PubMed:12697822). Interacts with histones H3.1, H3.2 and H3.1t (PubMed:33857403).</text>
</comment>
<comment type="interaction">
    <interactant intactId="EBI-1020839">
        <id>Q13111</id>
    </interactant>
    <interactant intactId="EBI-78219">
        <id>P45973</id>
        <label>CBX5</label>
    </interactant>
    <organismsDiffer>false</organismsDiffer>
    <experiments>8</experiments>
</comment>
<comment type="interaction">
    <interactant intactId="EBI-1020839">
        <id>Q13111</id>
    </interactant>
    <interactant intactId="EBI-1020839">
        <id>Q13111</id>
        <label>CHAF1A</label>
    </interactant>
    <organismsDiffer>false</organismsDiffer>
    <experiments>3</experiments>
</comment>
<comment type="interaction">
    <interactant intactId="EBI-1020839">
        <id>Q13111</id>
    </interactant>
    <interactant intactId="EBI-949368">
        <id>Q99684</id>
        <label>GFI1</label>
    </interactant>
    <organismsDiffer>false</organismsDiffer>
    <experiments>4</experiments>
</comment>
<comment type="interaction">
    <interactant intactId="EBI-1020839">
        <id>Q13111</id>
    </interactant>
    <interactant intactId="EBI-120658">
        <id>P84243</id>
        <label>H3-3B</label>
    </interactant>
    <organismsDiffer>false</organismsDiffer>
    <experiments>3</experiments>
</comment>
<comment type="interaction">
    <interactant intactId="EBI-1020839">
        <id>Q13111</id>
    </interactant>
    <interactant intactId="EBI-750650">
        <id>Q71DI3</id>
        <label>H3C15</label>
    </interactant>
    <organismsDiffer>false</organismsDiffer>
    <experiments>2</experiments>
</comment>
<comment type="interaction">
    <interactant intactId="EBI-1020839">
        <id>Q13111</id>
    </interactant>
    <interactant intactId="EBI-867196">
        <id>Q9UIS9</id>
        <label>MBD1</label>
    </interactant>
    <organismsDiffer>false</organismsDiffer>
    <experiments>3</experiments>
</comment>
<comment type="interaction">
    <interactant intactId="EBI-1020839">
        <id>Q13111</id>
    </interactant>
    <interactant intactId="EBI-19944212">
        <id>A8MW99</id>
        <label>MEI4</label>
    </interactant>
    <organismsDiffer>false</organismsDiffer>
    <experiments>3</experiments>
</comment>
<comment type="interaction">
    <interactant intactId="EBI-1020839">
        <id>Q13111</id>
    </interactant>
    <interactant intactId="EBI-389883">
        <id>P16333</id>
        <label>NCK1</label>
    </interactant>
    <organismsDiffer>false</organismsDiffer>
    <experiments>2</experiments>
</comment>
<comment type="interaction">
    <interactant intactId="EBI-1020839">
        <id>Q13111</id>
    </interactant>
    <interactant intactId="EBI-17490746">
        <id>A8MTQ0</id>
        <label>NOTO</label>
    </interactant>
    <organismsDiffer>false</organismsDiffer>
    <experiments>3</experiments>
</comment>
<comment type="interaction">
    <interactant intactId="EBI-1020839">
        <id>Q13111</id>
    </interactant>
    <interactant intactId="EBI-747278">
        <id>P26367</id>
        <label>PAX6</label>
    </interactant>
    <organismsDiffer>false</organismsDiffer>
    <experiments>3</experiments>
</comment>
<comment type="interaction">
    <interactant intactId="EBI-1020839">
        <id>Q13111</id>
    </interactant>
    <interactant intactId="EBI-358311">
        <id>P12004</id>
        <label>PCNA</label>
    </interactant>
    <organismsDiffer>false</organismsDiffer>
    <experiments>4</experiments>
</comment>
<comment type="interaction">
    <interactant intactId="EBI-1020839">
        <id>Q13111</id>
    </interactant>
    <interactant intactId="EBI-79464">
        <id>P27986</id>
        <label>PIK3R1</label>
    </interactant>
    <organismsDiffer>false</organismsDiffer>
    <experiments>2</experiments>
</comment>
<comment type="interaction">
    <interactant intactId="EBI-1020839">
        <id>Q13111</id>
    </interactant>
    <interactant intactId="EBI-12029004">
        <id>P78424</id>
        <label>POU6F2</label>
    </interactant>
    <organismsDiffer>false</organismsDiffer>
    <experiments>3</experiments>
</comment>
<comment type="interaction">
    <interactant intactId="EBI-1020839">
        <id>Q13111</id>
    </interactant>
    <interactant intactId="EBI-307352">
        <id>Q04864</id>
        <label>REL</label>
    </interactant>
    <organismsDiffer>false</organismsDiffer>
    <experiments>3</experiments>
</comment>
<comment type="interaction">
    <interactant intactId="EBI-1020839">
        <id>Q13111</id>
    </interactant>
    <interactant intactId="EBI-10829018">
        <id>Q04864-2</id>
        <label>REL</label>
    </interactant>
    <organismsDiffer>false</organismsDiffer>
    <experiments>3</experiments>
</comment>
<comment type="interaction">
    <interactant intactId="EBI-1020839">
        <id>Q13111</id>
    </interactant>
    <interactant intactId="EBI-748601">
        <id>Q9UHV2</id>
        <label>SERTAD1</label>
    </interactant>
    <organismsDiffer>false</organismsDiffer>
    <experiments>3</experiments>
</comment>
<comment type="interaction">
    <interactant intactId="EBI-1020839">
        <id>Q13111</id>
    </interactant>
    <interactant intactId="EBI-1186119">
        <id>P51692</id>
        <label>STAT5B</label>
    </interactant>
    <organismsDiffer>false</organismsDiffer>
    <experiments>3</experiments>
</comment>
<comment type="interaction">
    <interactant intactId="EBI-1020839">
        <id>Q13111</id>
    </interactant>
    <interactant intactId="EBI-533224">
        <id>P15884</id>
        <label>TCF4</label>
    </interactant>
    <organismsDiffer>false</organismsDiffer>
    <experiments>3</experiments>
</comment>
<comment type="interaction">
    <interactant intactId="EBI-1020839">
        <id>Q13111</id>
    </interactant>
    <interactant intactId="EBI-13636688">
        <id>P15884-3</id>
        <label>TCF4</label>
    </interactant>
    <organismsDiffer>false</organismsDiffer>
    <experiments>3</experiments>
</comment>
<comment type="interaction">
    <interactant intactId="EBI-1020839">
        <id>Q13111</id>
    </interactant>
    <interactant intactId="EBI-492476">
        <id>Q96RU7</id>
        <label>TRIB3</label>
    </interactant>
    <organismsDiffer>false</organismsDiffer>
    <experiments>5</experiments>
</comment>
<comment type="interaction">
    <interactant intactId="EBI-1020839">
        <id>Q13111</id>
    </interactant>
    <interactant intactId="EBI-356498">
        <id>P62258</id>
        <label>YWHAE</label>
    </interactant>
    <organismsDiffer>false</organismsDiffer>
    <experiments>3</experiments>
</comment>
<comment type="interaction">
    <interactant intactId="EBI-1020839">
        <id>Q13111</id>
    </interactant>
    <interactant intactId="EBI-4395669">
        <id>Q6ZNG0</id>
        <label>ZNF620</label>
    </interactant>
    <organismsDiffer>false</organismsDiffer>
    <experiments>3</experiments>
</comment>
<comment type="subcellular location">
    <subcellularLocation>
        <location evidence="3">Nucleus</location>
    </subcellularLocation>
    <text>DNA replication foci.</text>
</comment>
<comment type="alternative products">
    <event type="alternative splicing"/>
    <isoform>
        <id>Q13111-1</id>
        <name>1</name>
        <sequence type="displayed"/>
    </isoform>
    <isoform>
        <id>Q13111-2</id>
        <name>2</name>
        <sequence type="described" ref="VSP_004149 VSP_004150"/>
    </isoform>
    <isoform>
        <id>Q13111-3</id>
        <name>3</name>
        <sequence type="described" ref="VSP_004151"/>
    </isoform>
    <text>Experimental confirmation may be lacking for some isoforms.</text>
</comment>
<comment type="developmental stage">
    <text>Active complex is found in G1, S and G2 phases.</text>
</comment>
<comment type="domain">
    <text>Contains one Pro-Xaa-Val-Xaa-Leu (PxVxL) motif, which is required for interaction with chromoshadow domains. This motif requires additional residues -7, -6, +4 and +5 of the central Val which contact the chromoshadow domain.</text>
</comment>
<comment type="similarity">
    <text evidence="13">Belongs to the CHAF1A family.</text>
</comment>
<comment type="caution">
    <text evidence="7 10">Was reported to form, during DNA replication, a S phase-specific complex that would facilitate methylation of H3 'Lys-9' during replication-coupled chromatin assembly and vould be at least composed of the CAF-1 subunit CHAF1A, MBD1 and SETDB1 (PubMed:15327775). However, this paper has been retracted because some data, results and conclusions are not reliable (PubMed:30849389).</text>
</comment>
<comment type="sequence caution" evidence="13">
    <conflict type="erroneous initiation">
        <sequence resource="EMBL-CDS" id="AAA76736"/>
    </conflict>
    <text>Truncated N-terminus.</text>
</comment>
<comment type="sequence caution" evidence="13">
    <conflict type="erroneous initiation">
        <sequence resource="EMBL-CDS" id="AAF04291"/>
    </conflict>
    <text>Truncated N-terminus.</text>
</comment>
<comment type="sequence caution" evidence="13">
    <conflict type="erroneous initiation">
        <sequence resource="EMBL-CDS" id="AAH52620"/>
    </conflict>
    <text>Truncated N-terminus.</text>
</comment>
<comment type="sequence caution" evidence="13">
    <conflict type="miscellaneous discrepancy">
        <sequence resource="EMBL-CDS" id="AAH52620"/>
    </conflict>
    <text>Contaminating sequence. Potential poly-A sequence starting in position 426.</text>
</comment>
<name>CAF1A_HUMAN</name>
<reference key="1">
    <citation type="journal article" date="2001" name="Gene">
        <title>Genomic sequence and expression analyses of human chromatin assembly factor 1 p150 gene.</title>
        <authorList>
            <person name="Dong H."/>
            <person name="Lin W."/>
            <person name="Zhang C.-K."/>
            <person name="Xiong H."/>
            <person name="Fu G."/>
            <person name="Jin W.-R."/>
            <person name="Chen R."/>
            <person name="Chen Z."/>
            <person name="Qi Z.-T."/>
            <person name="Huang G.M."/>
        </authorList>
    </citation>
    <scope>NUCLEOTIDE SEQUENCE [GENOMIC DNA]</scope>
    <scope>ALTERNATIVE SPLICING (ISOFORMS 1; 2 AND 3)</scope>
    <scope>VARIANT VAL-923</scope>
</reference>
<reference key="2">
    <citation type="journal article" date="2004" name="Nature">
        <title>The DNA sequence and biology of human chromosome 19.</title>
        <authorList>
            <person name="Grimwood J."/>
            <person name="Gordon L.A."/>
            <person name="Olsen A.S."/>
            <person name="Terry A."/>
            <person name="Schmutz J."/>
            <person name="Lamerdin J.E."/>
            <person name="Hellsten U."/>
            <person name="Goodstein D."/>
            <person name="Couronne O."/>
            <person name="Tran-Gyamfi M."/>
            <person name="Aerts A."/>
            <person name="Altherr M."/>
            <person name="Ashworth L."/>
            <person name="Bajorek E."/>
            <person name="Black S."/>
            <person name="Branscomb E."/>
            <person name="Caenepeel S."/>
            <person name="Carrano A.V."/>
            <person name="Caoile C."/>
            <person name="Chan Y.M."/>
            <person name="Christensen M."/>
            <person name="Cleland C.A."/>
            <person name="Copeland A."/>
            <person name="Dalin E."/>
            <person name="Dehal P."/>
            <person name="Denys M."/>
            <person name="Detter J.C."/>
            <person name="Escobar J."/>
            <person name="Flowers D."/>
            <person name="Fotopulos D."/>
            <person name="Garcia C."/>
            <person name="Georgescu A.M."/>
            <person name="Glavina T."/>
            <person name="Gomez M."/>
            <person name="Gonzales E."/>
            <person name="Groza M."/>
            <person name="Hammon N."/>
            <person name="Hawkins T."/>
            <person name="Haydu L."/>
            <person name="Ho I."/>
            <person name="Huang W."/>
            <person name="Israni S."/>
            <person name="Jett J."/>
            <person name="Kadner K."/>
            <person name="Kimball H."/>
            <person name="Kobayashi A."/>
            <person name="Larionov V."/>
            <person name="Leem S.-H."/>
            <person name="Lopez F."/>
            <person name="Lou Y."/>
            <person name="Lowry S."/>
            <person name="Malfatti S."/>
            <person name="Martinez D."/>
            <person name="McCready P.M."/>
            <person name="Medina C."/>
            <person name="Morgan J."/>
            <person name="Nelson K."/>
            <person name="Nolan M."/>
            <person name="Ovcharenko I."/>
            <person name="Pitluck S."/>
            <person name="Pollard M."/>
            <person name="Popkie A.P."/>
            <person name="Predki P."/>
            <person name="Quan G."/>
            <person name="Ramirez L."/>
            <person name="Rash S."/>
            <person name="Retterer J."/>
            <person name="Rodriguez A."/>
            <person name="Rogers S."/>
            <person name="Salamov A."/>
            <person name="Salazar A."/>
            <person name="She X."/>
            <person name="Smith D."/>
            <person name="Slezak T."/>
            <person name="Solovyev V."/>
            <person name="Thayer N."/>
            <person name="Tice H."/>
            <person name="Tsai M."/>
            <person name="Ustaszewska A."/>
            <person name="Vo N."/>
            <person name="Wagner M."/>
            <person name="Wheeler J."/>
            <person name="Wu K."/>
            <person name="Xie G."/>
            <person name="Yang J."/>
            <person name="Dubchak I."/>
            <person name="Furey T.S."/>
            <person name="DeJong P."/>
            <person name="Dickson M."/>
            <person name="Gordon D."/>
            <person name="Eichler E.E."/>
            <person name="Pennacchio L.A."/>
            <person name="Richardson P."/>
            <person name="Stubbs L."/>
            <person name="Rokhsar D.S."/>
            <person name="Myers R.M."/>
            <person name="Rubin E.M."/>
            <person name="Lucas S.M."/>
        </authorList>
    </citation>
    <scope>NUCLEOTIDE SEQUENCE [LARGE SCALE GENOMIC DNA]</scope>
</reference>
<reference key="3">
    <citation type="journal article" date="2004" name="Genome Res.">
        <title>The status, quality, and expansion of the NIH full-length cDNA project: the Mammalian Gene Collection (MGC).</title>
        <authorList>
            <consortium name="The MGC Project Team"/>
        </authorList>
    </citation>
    <scope>NUCLEOTIDE SEQUENCE [LARGE SCALE MRNA] (ISOFORM 1)</scope>
    <source>
        <tissue>Brain</tissue>
        <tissue>Ovary</tissue>
    </source>
</reference>
<reference key="4">
    <citation type="journal article" date="1995" name="Cell">
        <title>The p150 and p60 subunits of chromatin assembly factor I: a molecular link between newly synthesized histones and DNA replication.</title>
        <authorList>
            <person name="Kaufman P.D."/>
            <person name="Kobayashi R."/>
            <person name="Kessler N."/>
            <person name="Stillman B."/>
        </authorList>
    </citation>
    <scope>NUCLEOTIDE SEQUENCE [MRNA] OF 6-956 (ISOFORM 1)</scope>
    <scope>VARIANT VAL-923</scope>
    <source>
        <tissue>Cervix adenocarcinoma</tissue>
    </source>
</reference>
<reference key="5">
    <citation type="journal article" date="1999" name="Cell">
        <title>Replication-dependent marking of DNA by PCNA facilitates CAF-1-coupled inheritance of chromatin.</title>
        <authorList>
            <person name="Shibahara K."/>
            <person name="Stillman B."/>
        </authorList>
    </citation>
    <scope>INTERACTION WITH PCNA</scope>
    <scope>SUBCELLULAR LOCATION</scope>
</reference>
<reference key="6">
    <citation type="journal article" date="2000" name="Mol. Cell. Biol.">
        <title>A CAF-1-PCNA-mediated chromatin assembly pathway triggered by sensing DNA damage.</title>
        <authorList>
            <person name="Moggs J.G."/>
            <person name="Grandi P."/>
            <person name="Quivy J.P."/>
            <person name="Jonsson Z.O."/>
            <person name="Hubscher U."/>
            <person name="Becker P.B."/>
            <person name="Almouzni G."/>
        </authorList>
    </citation>
    <scope>INTERACTION WITH PCNA</scope>
</reference>
<reference key="7">
    <citation type="journal article" date="2000" name="J. Cell Sci.">
        <title>CAF-1 and the inheritance of chromatin states: at the crossroads of DNA replication and repair.</title>
        <authorList>
            <person name="Ridgway P."/>
            <person name="Almouzni G."/>
        </authorList>
    </citation>
    <scope>REVIEW</scope>
</reference>
<reference key="8">
    <citation type="journal article" date="2001" name="EMBO J.">
        <title>Dimerization of the largest subunit of chromatin assembly factor 1: importance in vitro and during Xenopus early development.</title>
        <authorList>
            <person name="Quivy J.-P."/>
            <person name="Grandi P."/>
            <person name="Almouzni G."/>
        </authorList>
    </citation>
    <scope>HOMODIMERIZATION</scope>
</reference>
<reference key="9">
    <citation type="journal article" date="2003" name="Mol. Cell. Biol.">
        <title>The methyl-CpG binding protein MBD1 interacts with the p150 subunit of chromatin assembly factor 1.</title>
        <authorList>
            <person name="Reese B.E."/>
            <person name="Bachman K.E."/>
            <person name="Baylin S.B."/>
            <person name="Rountree M.R."/>
        </authorList>
    </citation>
    <scope>INTERACTION WITH MBD1</scope>
</reference>
<reference key="10">
    <citation type="journal article" date="2004" name="Mol. Cell">
        <title>Methyl-CpG binding protein MBD1 couples histone H3 methylation at lysine 9 by SETDB1 to DNA replication and chromatin assembly.</title>
        <authorList>
            <person name="Sarraf S.A."/>
            <person name="Stancheva I."/>
        </authorList>
    </citation>
    <scope>RETRACTED PAPER</scope>
    <scope>FUNCTION</scope>
    <scope>INTERACTION WITH MBD1 AND SETDB1</scope>
</reference>
<reference key="11">
    <citation type="journal article" date="2019" name="Mol. Cell">
        <title>Retraction Notice to: Methyl-CpG Binding Protein MBD1 Couples Histone H3 Methylation at Lysine 9 by SETDB1 to DNA Replication and Chromatin Assembly.</title>
        <authorList>
            <person name="Sarraf S.A."/>
            <person name="Stancheva I."/>
        </authorList>
    </citation>
    <scope>RETRACTION NOTICE OF PUBMED:15327775</scope>
</reference>
<reference key="12">
    <citation type="journal article" date="2005" name="Biochem. Biophys. Res. Commun.">
        <title>The mammalian heterochromatin protein 1 binds diverse nuclear proteins through a common motif that targets the chromoshadow domain.</title>
        <authorList>
            <person name="Lechner M.S."/>
            <person name="Schultz D.C."/>
            <person name="Negorev D."/>
            <person name="Maul G.G."/>
            <person name="Rauscher F.J. III"/>
        </authorList>
    </citation>
    <scope>INTERACTION WITH CBX5</scope>
</reference>
<reference key="13">
    <citation type="journal article" date="2006" name="Cell">
        <title>Global, in vivo, and site-specific phosphorylation dynamics in signaling networks.</title>
        <authorList>
            <person name="Olsen J.V."/>
            <person name="Blagoev B."/>
            <person name="Gnad F."/>
            <person name="Macek B."/>
            <person name="Kumar C."/>
            <person name="Mortensen P."/>
            <person name="Mann M."/>
        </authorList>
    </citation>
    <scope>IDENTIFICATION BY MASS SPECTROMETRY [LARGE SCALE ANALYSIS]</scope>
    <source>
        <tissue>Cervix carcinoma</tissue>
    </source>
</reference>
<reference key="14">
    <citation type="journal article" date="2008" name="J. Proteome Res.">
        <title>Combining protein-based IMAC, peptide-based IMAC, and MudPIT for efficient phosphoproteomic analysis.</title>
        <authorList>
            <person name="Cantin G.T."/>
            <person name="Yi W."/>
            <person name="Lu B."/>
            <person name="Park S.K."/>
            <person name="Xu T."/>
            <person name="Lee J.-D."/>
            <person name="Yates J.R. III"/>
        </authorList>
    </citation>
    <scope>PHOSPHORYLATION [LARGE SCALE ANALYSIS] AT SER-65</scope>
    <scope>IDENTIFICATION BY MASS SPECTROMETRY [LARGE SCALE ANALYSIS]</scope>
    <source>
        <tissue>Cervix carcinoma</tissue>
    </source>
</reference>
<reference key="15">
    <citation type="journal article" date="2008" name="Proc. Natl. Acad. Sci. U.S.A.">
        <title>A quantitative atlas of mitotic phosphorylation.</title>
        <authorList>
            <person name="Dephoure N."/>
            <person name="Zhou C."/>
            <person name="Villen J."/>
            <person name="Beausoleil S.A."/>
            <person name="Bakalarski C.E."/>
            <person name="Elledge S.J."/>
            <person name="Gygi S.P."/>
        </authorList>
    </citation>
    <scope>PHOSPHORYLATION [LARGE SCALE ANALYSIS] AT SER-224; THR-722; SER-772; SER-775; SER-873 AND SER-951</scope>
    <scope>IDENTIFICATION BY MASS SPECTROMETRY [LARGE SCALE ANALYSIS]</scope>
    <source>
        <tissue>Cervix carcinoma</tissue>
    </source>
</reference>
<reference key="16">
    <citation type="journal article" date="2009" name="Anal. Chem.">
        <title>Lys-N and trypsin cover complementary parts of the phosphoproteome in a refined SCX-based approach.</title>
        <authorList>
            <person name="Gauci S."/>
            <person name="Helbig A.O."/>
            <person name="Slijper M."/>
            <person name="Krijgsveld J."/>
            <person name="Heck A.J."/>
            <person name="Mohammed S."/>
        </authorList>
    </citation>
    <scope>IDENTIFICATION BY MASS SPECTROMETRY [LARGE SCALE ANALYSIS]</scope>
</reference>
<reference key="17">
    <citation type="journal article" date="2009" name="Sci. Signal.">
        <title>Quantitative phosphoproteomic analysis of T cell receptor signaling reveals system-wide modulation of protein-protein interactions.</title>
        <authorList>
            <person name="Mayya V."/>
            <person name="Lundgren D.H."/>
            <person name="Hwang S.-I."/>
            <person name="Rezaul K."/>
            <person name="Wu L."/>
            <person name="Eng J.K."/>
            <person name="Rodionov V."/>
            <person name="Han D.K."/>
        </authorList>
    </citation>
    <scope>IDENTIFICATION BY MASS SPECTROMETRY [LARGE SCALE ANALYSIS]</scope>
    <source>
        <tissue>Leukemic T-cell</tissue>
    </source>
</reference>
<reference key="18">
    <citation type="journal article" date="2010" name="Nat. Cell Biol.">
        <title>Human POGZ modulates dissociation of HP1alpha from mitotic chromosome arms through Aurora B activation.</title>
        <authorList>
            <person name="Nozawa R.S."/>
            <person name="Nagao K."/>
            <person name="Masuda H.T."/>
            <person name="Iwasaki O."/>
            <person name="Hirota T."/>
            <person name="Nozaki N."/>
            <person name="Kimura H."/>
            <person name="Obuse C."/>
        </authorList>
    </citation>
    <scope>INTERACTION WITH CBX5</scope>
    <scope>MUTAGENESIS OF VAL-240 AND LEU-242</scope>
</reference>
<reference key="19">
    <citation type="journal article" date="2010" name="Sci. Signal.">
        <title>Quantitative phosphoproteomics reveals widespread full phosphorylation site occupancy during mitosis.</title>
        <authorList>
            <person name="Olsen J.V."/>
            <person name="Vermeulen M."/>
            <person name="Santamaria A."/>
            <person name="Kumar C."/>
            <person name="Miller M.L."/>
            <person name="Jensen L.J."/>
            <person name="Gnad F."/>
            <person name="Cox J."/>
            <person name="Jensen T.S."/>
            <person name="Nigg E.A."/>
            <person name="Brunak S."/>
            <person name="Mann M."/>
        </authorList>
    </citation>
    <scope>PHOSPHORYLATION [LARGE SCALE ANALYSIS] AT SER-123; SER-138; SER-141; SER-143; SER-224; THR-722; SER-772; THR-865; SER-873 AND SER-951</scope>
    <scope>IDENTIFICATION BY MASS SPECTROMETRY [LARGE SCALE ANALYSIS]</scope>
    <source>
        <tissue>Cervix carcinoma</tissue>
    </source>
</reference>
<reference key="20">
    <citation type="journal article" date="2011" name="Sci. Signal.">
        <title>System-wide temporal characterization of the proteome and phosphoproteome of human embryonic stem cell differentiation.</title>
        <authorList>
            <person name="Rigbolt K.T."/>
            <person name="Prokhorova T.A."/>
            <person name="Akimov V."/>
            <person name="Henningsen J."/>
            <person name="Johansen P.T."/>
            <person name="Kratchmarova I."/>
            <person name="Kassem M."/>
            <person name="Mann M."/>
            <person name="Olsen J.V."/>
            <person name="Blagoev B."/>
        </authorList>
    </citation>
    <scope>PHOSPHORYLATION [LARGE SCALE ANALYSIS] AT SER-65; SER-141; SER-143; SER-206; THR-722; SER-772; SER-775 AND SER-951</scope>
    <scope>IDENTIFICATION BY MASS SPECTROMETRY [LARGE SCALE ANALYSIS]</scope>
</reference>
<reference key="21">
    <citation type="journal article" date="2013" name="J. Proteome Res.">
        <title>Toward a comprehensive characterization of a human cancer cell phosphoproteome.</title>
        <authorList>
            <person name="Zhou H."/>
            <person name="Di Palma S."/>
            <person name="Preisinger C."/>
            <person name="Peng M."/>
            <person name="Polat A.N."/>
            <person name="Heck A.J."/>
            <person name="Mohammed S."/>
        </authorList>
    </citation>
    <scope>PHOSPHORYLATION [LARGE SCALE ANALYSIS] AT SER-141; SER-206; SER-310; SER-772; SER-803; SER-868 AND SER-873</scope>
    <scope>IDENTIFICATION BY MASS SPECTROMETRY [LARGE SCALE ANALYSIS]</scope>
    <source>
        <tissue>Cervix carcinoma</tissue>
        <tissue>Erythroleukemia</tissue>
    </source>
</reference>
<reference key="22">
    <citation type="journal article" date="2014" name="Nat. Struct. Mol. Biol.">
        <title>Uncovering global SUMOylation signaling networks in a site-specific manner.</title>
        <authorList>
            <person name="Hendriks I.A."/>
            <person name="D'Souza R.C."/>
            <person name="Yang B."/>
            <person name="Verlaan-de Vries M."/>
            <person name="Mann M."/>
            <person name="Vertegaal A.C."/>
        </authorList>
    </citation>
    <scope>SUMOYLATION [LARGE SCALE ANALYSIS] AT LYS-182</scope>
    <scope>IDENTIFICATION BY MASS SPECTROMETRY [LARGE SCALE ANALYSIS]</scope>
</reference>
<reference key="23">
    <citation type="journal article" date="2014" name="Proc. Natl. Acad. Sci. U.S.A.">
        <title>Mapping of SUMO sites and analysis of SUMOylation changes induced by external stimuli.</title>
        <authorList>
            <person name="Impens F."/>
            <person name="Radoshevich L."/>
            <person name="Cossart P."/>
            <person name="Ribet D."/>
        </authorList>
    </citation>
    <scope>SUMOYLATION [LARGE SCALE ANALYSIS] AT LYS-182</scope>
    <scope>IDENTIFICATION BY MASS SPECTROMETRY [LARGE SCALE ANALYSIS]</scope>
</reference>
<reference key="24">
    <citation type="journal article" date="2017" name="Nat. Struct. Mol. Biol.">
        <title>Site-specific mapping of the human SUMO proteome reveals co-modification with phosphorylation.</title>
        <authorList>
            <person name="Hendriks I.A."/>
            <person name="Lyon D."/>
            <person name="Young C."/>
            <person name="Jensen L.J."/>
            <person name="Vertegaal A.C."/>
            <person name="Nielsen M.L."/>
        </authorList>
    </citation>
    <scope>SUMOYLATION [LARGE SCALE ANALYSIS] AT LYS-182</scope>
    <scope>IDENTIFICATION BY MASS SPECTROMETRY [LARGE SCALE ANALYSIS]</scope>
</reference>
<reference key="25">
    <citation type="journal article" date="2021" name="Mol. Cell">
        <title>DNAJC9 integrates heat shock molecular chaperones into the histone chaperone network.</title>
        <authorList>
            <person name="Hammond C.M."/>
            <person name="Bao H."/>
            <person name="Hendriks I.A."/>
            <person name="Carraro M."/>
            <person name="Garcia-Nieto A."/>
            <person name="Liu Y."/>
            <person name="Reveron-Gomez N."/>
            <person name="Spanos C."/>
            <person name="Chen L."/>
            <person name="Rappsilber J."/>
            <person name="Nielsen M.L."/>
            <person name="Patel D.J."/>
            <person name="Huang H."/>
            <person name="Groth A."/>
        </authorList>
    </citation>
    <scope>INTERACTION WITH HISTONES H3.1; H3.2 AND H3.1T</scope>
</reference>
<accession>Q13111</accession>
<accession>Q6NXG5</accession>
<accession>Q7Z7K3</accession>
<accession>Q9UJY8</accession>
<protein>
    <recommendedName>
        <fullName evidence="13">Chromatin assembly factor 1 subunit A</fullName>
        <shortName>CAF-1 subunit A</shortName>
    </recommendedName>
    <alternativeName>
        <fullName>Chromatin assembly factor I p150 subunit</fullName>
        <shortName>CAF-I 150 kDa subunit</shortName>
        <shortName>CAF-I p150</shortName>
        <shortName>hp150</shortName>
    </alternativeName>
</protein>
<dbReference type="EMBL" id="AF190465">
    <property type="protein sequence ID" value="AAF04291.1"/>
    <property type="status" value="ALT_INIT"/>
    <property type="molecule type" value="Genomic_DNA"/>
</dbReference>
<dbReference type="EMBL" id="AC011498">
    <property type="status" value="NOT_ANNOTATED_CDS"/>
    <property type="molecule type" value="Genomic_DNA"/>
</dbReference>
<dbReference type="EMBL" id="KF459577">
    <property type="status" value="NOT_ANNOTATED_CDS"/>
    <property type="molecule type" value="Genomic_DNA"/>
</dbReference>
<dbReference type="EMBL" id="BC052620">
    <property type="protein sequence ID" value="AAH52620.1"/>
    <property type="status" value="ALT_SEQ"/>
    <property type="molecule type" value="mRNA"/>
</dbReference>
<dbReference type="EMBL" id="BC067093">
    <property type="protein sequence ID" value="AAH67093.1"/>
    <property type="molecule type" value="mRNA"/>
</dbReference>
<dbReference type="EMBL" id="U20979">
    <property type="protein sequence ID" value="AAA76736.1"/>
    <property type="status" value="ALT_INIT"/>
    <property type="molecule type" value="mRNA"/>
</dbReference>
<dbReference type="CCDS" id="CCDS32875.1">
    <molecule id="Q13111-1"/>
</dbReference>
<dbReference type="PIR" id="A56731">
    <property type="entry name" value="A56731"/>
</dbReference>
<dbReference type="RefSeq" id="NP_005474.2">
    <molecule id="Q13111-1"/>
    <property type="nucleotide sequence ID" value="NM_005483.3"/>
</dbReference>
<dbReference type="PDB" id="7Y5K">
    <property type="method" value="X-ray"/>
    <property type="resolution" value="3.48 A"/>
    <property type="chains" value="A=442-714"/>
</dbReference>
<dbReference type="PDB" id="7Y5L">
    <property type="method" value="X-ray"/>
    <property type="resolution" value="3.42 A"/>
    <property type="chains" value="A/D=442-714"/>
</dbReference>
<dbReference type="PDB" id="7Y5O">
    <property type="method" value="X-ray"/>
    <property type="resolution" value="3.57 A"/>
    <property type="chains" value="A/D=442-714"/>
</dbReference>
<dbReference type="PDB" id="7Y5U">
    <property type="method" value="EM"/>
    <property type="resolution" value="3.80 A"/>
    <property type="chains" value="A=442-853"/>
</dbReference>
<dbReference type="PDB" id="7Y5V">
    <property type="method" value="EM"/>
    <property type="resolution" value="6.10 A"/>
    <property type="chains" value="A/F=442-853"/>
</dbReference>
<dbReference type="PDB" id="7Y60">
    <property type="method" value="EM"/>
    <property type="resolution" value="3.80 A"/>
    <property type="chains" value="K=442-853"/>
</dbReference>
<dbReference type="PDB" id="7Y61">
    <property type="method" value="EM"/>
    <property type="resolution" value="5.60 A"/>
    <property type="chains" value="K/M=442-853"/>
</dbReference>
<dbReference type="PDB" id="8IQF">
    <property type="method" value="EM"/>
    <property type="resolution" value="4.60 A"/>
    <property type="chains" value="A/F=1-956"/>
</dbReference>
<dbReference type="PDB" id="8IQG">
    <property type="method" value="EM"/>
    <property type="resolution" value="3.50 A"/>
    <property type="chains" value="A=1-956"/>
</dbReference>
<dbReference type="PDB" id="8J6S">
    <property type="method" value="EM"/>
    <property type="resolution" value="3.80 A"/>
    <property type="chains" value="K=1-956"/>
</dbReference>
<dbReference type="PDB" id="8J6T">
    <property type="method" value="EM"/>
    <property type="resolution" value="6.60 A"/>
    <property type="chains" value="K/M=1-956"/>
</dbReference>
<dbReference type="PDBsum" id="7Y5K"/>
<dbReference type="PDBsum" id="7Y5L"/>
<dbReference type="PDBsum" id="7Y5O"/>
<dbReference type="PDBsum" id="7Y5U"/>
<dbReference type="PDBsum" id="7Y5V"/>
<dbReference type="PDBsum" id="7Y60"/>
<dbReference type="PDBsum" id="7Y61"/>
<dbReference type="PDBsum" id="8IQF"/>
<dbReference type="PDBsum" id="8IQG"/>
<dbReference type="PDBsum" id="8J6S"/>
<dbReference type="PDBsum" id="8J6T"/>
<dbReference type="EMDB" id="EMD-33625"/>
<dbReference type="EMDB" id="EMD-33626"/>
<dbReference type="EMDB" id="EMD-33630"/>
<dbReference type="EMDB" id="EMD-33631"/>
<dbReference type="EMDB" id="EMD-35660"/>
<dbReference type="EMDB" id="EMD-35661"/>
<dbReference type="EMDB" id="EMD-36013"/>
<dbReference type="EMDB" id="EMD-36014"/>
<dbReference type="SASBDB" id="Q13111"/>
<dbReference type="SMR" id="Q13111"/>
<dbReference type="BioGRID" id="115349">
    <property type="interactions" value="207"/>
</dbReference>
<dbReference type="ComplexPortal" id="CPX-569">
    <property type="entry name" value="Chromatin assembly factor 1 complex"/>
</dbReference>
<dbReference type="CORUM" id="Q13111"/>
<dbReference type="DIP" id="DIP-31135N"/>
<dbReference type="ELM" id="Q13111"/>
<dbReference type="FunCoup" id="Q13111">
    <property type="interactions" value="1408"/>
</dbReference>
<dbReference type="IntAct" id="Q13111">
    <property type="interactions" value="82"/>
</dbReference>
<dbReference type="MINT" id="Q13111"/>
<dbReference type="STRING" id="9606.ENSP00000301280"/>
<dbReference type="GlyGen" id="Q13111">
    <property type="glycosylation" value="2 sites, 1 N-linked glycan (1 site), 1 O-linked glycan (1 site)"/>
</dbReference>
<dbReference type="iPTMnet" id="Q13111"/>
<dbReference type="PhosphoSitePlus" id="Q13111"/>
<dbReference type="SwissPalm" id="Q13111"/>
<dbReference type="BioMuta" id="CHAF1A"/>
<dbReference type="DMDM" id="229462842"/>
<dbReference type="jPOST" id="Q13111"/>
<dbReference type="MassIVE" id="Q13111"/>
<dbReference type="PaxDb" id="9606-ENSP00000301280"/>
<dbReference type="PeptideAtlas" id="Q13111"/>
<dbReference type="ProteomicsDB" id="59160">
    <molecule id="Q13111-1"/>
</dbReference>
<dbReference type="ProteomicsDB" id="59161">
    <molecule id="Q13111-2"/>
</dbReference>
<dbReference type="ProteomicsDB" id="59162">
    <molecule id="Q13111-3"/>
</dbReference>
<dbReference type="Pumba" id="Q13111"/>
<dbReference type="Antibodypedia" id="4198">
    <property type="antibodies" value="242 antibodies from 33 providers"/>
</dbReference>
<dbReference type="DNASU" id="10036"/>
<dbReference type="Ensembl" id="ENST00000301280.10">
    <molecule id="Q13111-1"/>
    <property type="protein sequence ID" value="ENSP00000301280.4"/>
    <property type="gene ID" value="ENSG00000167670.16"/>
</dbReference>
<dbReference type="GeneID" id="10036"/>
<dbReference type="KEGG" id="hsa:10036"/>
<dbReference type="MANE-Select" id="ENST00000301280.10">
    <property type="protein sequence ID" value="ENSP00000301280.4"/>
    <property type="RefSeq nucleotide sequence ID" value="NM_005483.3"/>
    <property type="RefSeq protein sequence ID" value="NP_005474.2"/>
</dbReference>
<dbReference type="UCSC" id="uc002mal.4">
    <molecule id="Q13111-1"/>
    <property type="organism name" value="human"/>
</dbReference>
<dbReference type="AGR" id="HGNC:1910"/>
<dbReference type="CTD" id="10036"/>
<dbReference type="DisGeNET" id="10036"/>
<dbReference type="GeneCards" id="CHAF1A"/>
<dbReference type="HGNC" id="HGNC:1910">
    <property type="gene designation" value="CHAF1A"/>
</dbReference>
<dbReference type="HPA" id="ENSG00000167670">
    <property type="expression patterns" value="Tissue enhanced (bone)"/>
</dbReference>
<dbReference type="MIM" id="601246">
    <property type="type" value="gene"/>
</dbReference>
<dbReference type="neXtProt" id="NX_Q13111"/>
<dbReference type="OpenTargets" id="ENSG00000167670"/>
<dbReference type="PharmGKB" id="PA26446"/>
<dbReference type="VEuPathDB" id="HostDB:ENSG00000167670"/>
<dbReference type="eggNOG" id="KOG4364">
    <property type="taxonomic scope" value="Eukaryota"/>
</dbReference>
<dbReference type="GeneTree" id="ENSGT00440000034888"/>
<dbReference type="HOGENOM" id="CLU_014846_0_0_1"/>
<dbReference type="InParanoid" id="Q13111"/>
<dbReference type="OMA" id="DPWAQDK"/>
<dbReference type="OrthoDB" id="79480at2759"/>
<dbReference type="PAN-GO" id="Q13111">
    <property type="GO annotations" value="3 GO annotations based on evolutionary models"/>
</dbReference>
<dbReference type="PhylomeDB" id="Q13111"/>
<dbReference type="TreeFam" id="TF350377"/>
<dbReference type="PathwayCommons" id="Q13111"/>
<dbReference type="SignaLink" id="Q13111"/>
<dbReference type="SIGNOR" id="Q13111"/>
<dbReference type="BioGRID-ORCS" id="10036">
    <property type="hits" value="769 hits in 1168 CRISPR screens"/>
</dbReference>
<dbReference type="ChiTaRS" id="CHAF1A">
    <property type="organism name" value="human"/>
</dbReference>
<dbReference type="GeneWiki" id="CHAF1A"/>
<dbReference type="GenomeRNAi" id="10036"/>
<dbReference type="Pharos" id="Q13111">
    <property type="development level" value="Tbio"/>
</dbReference>
<dbReference type="PRO" id="PR:Q13111"/>
<dbReference type="Proteomes" id="UP000005640">
    <property type="component" value="Chromosome 19"/>
</dbReference>
<dbReference type="RNAct" id="Q13111">
    <property type="molecule type" value="protein"/>
</dbReference>
<dbReference type="Bgee" id="ENSG00000167670">
    <property type="expression patterns" value="Expressed in secondary oocyte and 202 other cell types or tissues"/>
</dbReference>
<dbReference type="ExpressionAtlas" id="Q13111">
    <property type="expression patterns" value="baseline and differential"/>
</dbReference>
<dbReference type="GO" id="GO:0033186">
    <property type="term" value="C:CAF-1 complex"/>
    <property type="evidence" value="ECO:0000314"/>
    <property type="project" value="UniProtKB"/>
</dbReference>
<dbReference type="GO" id="GO:0000785">
    <property type="term" value="C:chromatin"/>
    <property type="evidence" value="ECO:0000314"/>
    <property type="project" value="UniProtKB"/>
</dbReference>
<dbReference type="GO" id="GO:0005634">
    <property type="term" value="C:nucleus"/>
    <property type="evidence" value="ECO:0000318"/>
    <property type="project" value="GO_Central"/>
</dbReference>
<dbReference type="GO" id="GO:0032991">
    <property type="term" value="C:protein-containing complex"/>
    <property type="evidence" value="ECO:0000314"/>
    <property type="project" value="UniProtKB"/>
</dbReference>
<dbReference type="GO" id="GO:0003682">
    <property type="term" value="F:chromatin binding"/>
    <property type="evidence" value="ECO:0000304"/>
    <property type="project" value="ProtInc"/>
</dbReference>
<dbReference type="GO" id="GO:0070087">
    <property type="term" value="F:chromo shadow domain binding"/>
    <property type="evidence" value="ECO:0000353"/>
    <property type="project" value="BHF-UCL"/>
</dbReference>
<dbReference type="GO" id="GO:0042802">
    <property type="term" value="F:identical protein binding"/>
    <property type="evidence" value="ECO:0000353"/>
    <property type="project" value="IntAct"/>
</dbReference>
<dbReference type="GO" id="GO:0051082">
    <property type="term" value="F:unfolded protein binding"/>
    <property type="evidence" value="ECO:0000304"/>
    <property type="project" value="ProtInc"/>
</dbReference>
<dbReference type="GO" id="GO:0006281">
    <property type="term" value="P:DNA repair"/>
    <property type="evidence" value="ECO:0007669"/>
    <property type="project" value="UniProtKB-KW"/>
</dbReference>
<dbReference type="GO" id="GO:0006260">
    <property type="term" value="P:DNA replication"/>
    <property type="evidence" value="ECO:0007669"/>
    <property type="project" value="UniProtKB-KW"/>
</dbReference>
<dbReference type="GO" id="GO:0006335">
    <property type="term" value="P:DNA replication-dependent chromatin assembly"/>
    <property type="evidence" value="ECO:0000314"/>
    <property type="project" value="GO_Central"/>
</dbReference>
<dbReference type="GO" id="GO:0006334">
    <property type="term" value="P:nucleosome assembly"/>
    <property type="evidence" value="ECO:0000314"/>
    <property type="project" value="GO_Central"/>
</dbReference>
<dbReference type="InterPro" id="IPR021644">
    <property type="entry name" value="CAF-1_p150_acidic"/>
</dbReference>
<dbReference type="InterPro" id="IPR029105">
    <property type="entry name" value="CAF1-p150_C2"/>
</dbReference>
<dbReference type="InterPro" id="IPR029091">
    <property type="entry name" value="CAF1_p150_N"/>
</dbReference>
<dbReference type="InterPro" id="IPR022043">
    <property type="entry name" value="CAF1A_DD"/>
</dbReference>
<dbReference type="PANTHER" id="PTHR15272:SF0">
    <property type="entry name" value="CHROMATIN ASSEMBLY FACTOR 1 SUBUNIT A"/>
    <property type="match status" value="1"/>
</dbReference>
<dbReference type="PANTHER" id="PTHR15272">
    <property type="entry name" value="CHROMATIN ASSEMBLY FACTOR 1 SUBUNIT A CAF-1 SUBUNIT A"/>
    <property type="match status" value="1"/>
</dbReference>
<dbReference type="Pfam" id="PF15539">
    <property type="entry name" value="CAF1-p150_C2"/>
    <property type="match status" value="1"/>
</dbReference>
<dbReference type="Pfam" id="PF15557">
    <property type="entry name" value="CAF1-p150_N"/>
    <property type="match status" value="1"/>
</dbReference>
<dbReference type="Pfam" id="PF11600">
    <property type="entry name" value="CAF1A_acidic"/>
    <property type="match status" value="1"/>
</dbReference>
<dbReference type="Pfam" id="PF12253">
    <property type="entry name" value="CAF1A_dimeriz"/>
    <property type="match status" value="1"/>
</dbReference>
<proteinExistence type="evidence at protein level"/>
<sequence length="956" mass="106910">MLEELECGAPGARGAATAMDCKDRPAFPVKKLIQARLPFKRLNLVPKGKADDMSDDQGTSVQSKSPDLEASLDTLENNCHVGSDIDFRPKLVNGKGPLDNFLRNRIETSIGQSTVIIDLTEDSNEQPDSLVDHNKLNSEASPSREAINGQREDTGDQQGLLKAIQNDKLAFPGETLSDIPCKTEEEGVGCGGAGRRGDSQECSPRSCPELTSGPRMCPRKEQDSWSEAGGILFKGKVPMVVLQDILAVRPPQIKSLPATPQGKNMTPESEVLESFPEEDSVLSHSSLSSPSSTSSPEGPPAPPKQHSSTSPFPTSTPLRRITKKFVKGSTEKNKLRLQRDQERLGKQLKLRAEREEKEKLKEEAKRAKEEAKKKKEEEKELKEKERREKREKDEKEKAEKQRLKEERRKERQEALEAKLEEKRKKEEEKRLREEEKRIKAEKAEITRFFQKPKTPQAPKTLAGSCGKFAPFEIKEHMVLAPRRRTAFHPDLCSQLDQLLQQQSGEFSFLKDLKGRQPLRSGPTHVSTRNADIFNSDVVIVERGKGDGVPERRKFGRMKLLQFCENHRPAYWGTWNKKTALIRARDPWAQDTKLLDYEVDSDEEWEEEEPGESLSHSEGDDDDDMGEDEDEDDGFFVPHGYLSEDEGVTEECADPENHKVRQKLKAKEWDEFLAKGKRFRVLQPVKIGCVWAADRDCAGDDLKVLQQFAACFLETLPAQEEQTPKASKRERRDEQILAQLLPLLHGNVNGSKVIIREFQEHCRRGLLSNHTGSPRSPSTTYLHTPTPSEDAAIPSKSRLKRLISENSVYEKRPDFRMCWYVHPQVLQSFQQEHLPVPCQWSYVTSVPSAPKEDSGSVPSTGPSQGTPISLKRKSAGSMCITQFMKKRRHDGQIGAEDMDGFQADTEEEEEEEGDCMIVDVPDAAEVQAPCGAASGAGGGVGVDTGKATLTASPLGAS</sequence>
<keyword id="KW-0002">3D-structure</keyword>
<keyword id="KW-0025">Alternative splicing</keyword>
<keyword id="KW-0131">Cell cycle</keyword>
<keyword id="KW-0143">Chaperone</keyword>
<keyword id="KW-0156">Chromatin regulator</keyword>
<keyword id="KW-0227">DNA damage</keyword>
<keyword id="KW-0234">DNA repair</keyword>
<keyword id="KW-0235">DNA replication</keyword>
<keyword id="KW-1017">Isopeptide bond</keyword>
<keyword id="KW-0539">Nucleus</keyword>
<keyword id="KW-0597">Phosphoprotein</keyword>
<keyword id="KW-1267">Proteomics identification</keyword>
<keyword id="KW-1185">Reference proteome</keyword>
<keyword id="KW-0832">Ubl conjugation</keyword>
<gene>
    <name evidence="14" type="primary">CHAF1A</name>
    <name type="synonym">CAF</name>
    <name type="synonym">CAF1P150</name>
</gene>